<reference key="1">
    <citation type="submission" date="2006-11" db="EMBL/GenBank/DDBJ databases">
        <title>Identification and characterization of a new conjugation/ type IVA secretion system (trb/tra) of L. pneumophila Corby localized on a mobile genomic island.</title>
        <authorList>
            <person name="Gloeckner G."/>
            <person name="Albert-Weissenberger C."/>
            <person name="Weinmann E."/>
            <person name="Jacobi S."/>
            <person name="Schunder E."/>
            <person name="Steinert M."/>
            <person name="Buchrieser C."/>
            <person name="Hacker J."/>
            <person name="Heuner K."/>
        </authorList>
    </citation>
    <scope>NUCLEOTIDE SEQUENCE [LARGE SCALE GENOMIC DNA]</scope>
    <source>
        <strain>Corby</strain>
    </source>
</reference>
<feature type="chain" id="PRO_1000084748" description="tRNA pseudouridine synthase D">
    <location>
        <begin position="1"/>
        <end position="338"/>
    </location>
</feature>
<feature type="domain" description="TRUD" evidence="1">
    <location>
        <begin position="154"/>
        <end position="303"/>
    </location>
</feature>
<feature type="active site" description="Nucleophile" evidence="1">
    <location>
        <position position="79"/>
    </location>
</feature>
<gene>
    <name evidence="1" type="primary">truD</name>
    <name type="ordered locus">LPC_1050</name>
</gene>
<proteinExistence type="inferred from homology"/>
<keyword id="KW-0413">Isomerase</keyword>
<keyword id="KW-0819">tRNA processing</keyword>
<accession>A5ICB9</accession>
<evidence type="ECO:0000255" key="1">
    <source>
        <dbReference type="HAMAP-Rule" id="MF_01082"/>
    </source>
</evidence>
<comment type="function">
    <text evidence="1">Responsible for synthesis of pseudouridine from uracil-13 in transfer RNAs.</text>
</comment>
<comment type="catalytic activity">
    <reaction evidence="1">
        <text>uridine(13) in tRNA = pseudouridine(13) in tRNA</text>
        <dbReference type="Rhea" id="RHEA:42540"/>
        <dbReference type="Rhea" id="RHEA-COMP:10105"/>
        <dbReference type="Rhea" id="RHEA-COMP:10106"/>
        <dbReference type="ChEBI" id="CHEBI:65314"/>
        <dbReference type="ChEBI" id="CHEBI:65315"/>
        <dbReference type="EC" id="5.4.99.27"/>
    </reaction>
</comment>
<comment type="similarity">
    <text evidence="1">Belongs to the pseudouridine synthase TruD family.</text>
</comment>
<protein>
    <recommendedName>
        <fullName evidence="1">tRNA pseudouridine synthase D</fullName>
        <ecNumber evidence="1">5.4.99.27</ecNumber>
    </recommendedName>
    <alternativeName>
        <fullName evidence="1">tRNA pseudouridine(13) synthase</fullName>
    </alternativeName>
    <alternativeName>
        <fullName evidence="1">tRNA pseudouridylate synthase D</fullName>
    </alternativeName>
    <alternativeName>
        <fullName evidence="1">tRNA-uridine isomerase D</fullName>
    </alternativeName>
</protein>
<dbReference type="EC" id="5.4.99.27" evidence="1"/>
<dbReference type="EMBL" id="CP000675">
    <property type="protein sequence ID" value="ABQ55019.1"/>
    <property type="molecule type" value="Genomic_DNA"/>
</dbReference>
<dbReference type="RefSeq" id="WP_011946608.1">
    <property type="nucleotide sequence ID" value="NC_009494.2"/>
</dbReference>
<dbReference type="SMR" id="A5ICB9"/>
<dbReference type="KEGG" id="lpc:LPC_1050"/>
<dbReference type="HOGENOM" id="CLU_005281_4_0_6"/>
<dbReference type="GO" id="GO:0005829">
    <property type="term" value="C:cytosol"/>
    <property type="evidence" value="ECO:0007669"/>
    <property type="project" value="TreeGrafter"/>
</dbReference>
<dbReference type="GO" id="GO:0003723">
    <property type="term" value="F:RNA binding"/>
    <property type="evidence" value="ECO:0007669"/>
    <property type="project" value="InterPro"/>
</dbReference>
<dbReference type="GO" id="GO:0160150">
    <property type="term" value="F:tRNA pseudouridine(13) synthase activity"/>
    <property type="evidence" value="ECO:0007669"/>
    <property type="project" value="UniProtKB-EC"/>
</dbReference>
<dbReference type="GO" id="GO:0031119">
    <property type="term" value="P:tRNA pseudouridine synthesis"/>
    <property type="evidence" value="ECO:0007669"/>
    <property type="project" value="UniProtKB-UniRule"/>
</dbReference>
<dbReference type="CDD" id="cd02575">
    <property type="entry name" value="PseudoU_synth_EcTruD"/>
    <property type="match status" value="1"/>
</dbReference>
<dbReference type="Gene3D" id="3.30.2350.20">
    <property type="entry name" value="TruD, catalytic domain"/>
    <property type="match status" value="1"/>
</dbReference>
<dbReference type="Gene3D" id="3.30.2340.10">
    <property type="entry name" value="TruD, insertion domain"/>
    <property type="match status" value="1"/>
</dbReference>
<dbReference type="HAMAP" id="MF_01082">
    <property type="entry name" value="TruD"/>
    <property type="match status" value="1"/>
</dbReference>
<dbReference type="InterPro" id="IPR020103">
    <property type="entry name" value="PsdUridine_synth_cat_dom_sf"/>
</dbReference>
<dbReference type="InterPro" id="IPR001656">
    <property type="entry name" value="PsdUridine_synth_TruD"/>
</dbReference>
<dbReference type="InterPro" id="IPR020119">
    <property type="entry name" value="PsdUridine_synth_TruD_CS"/>
</dbReference>
<dbReference type="InterPro" id="IPR011760">
    <property type="entry name" value="PsdUridine_synth_TruD_insert"/>
</dbReference>
<dbReference type="InterPro" id="IPR042214">
    <property type="entry name" value="TruD_catalytic"/>
</dbReference>
<dbReference type="InterPro" id="IPR043165">
    <property type="entry name" value="TruD_insert_sf"/>
</dbReference>
<dbReference type="InterPro" id="IPR050170">
    <property type="entry name" value="TruD_pseudoU_synthase"/>
</dbReference>
<dbReference type="PANTHER" id="PTHR47811">
    <property type="entry name" value="TRNA PSEUDOURIDINE SYNTHASE D"/>
    <property type="match status" value="1"/>
</dbReference>
<dbReference type="PANTHER" id="PTHR47811:SF1">
    <property type="entry name" value="TRNA PSEUDOURIDINE SYNTHASE D"/>
    <property type="match status" value="1"/>
</dbReference>
<dbReference type="Pfam" id="PF01142">
    <property type="entry name" value="TruD"/>
    <property type="match status" value="2"/>
</dbReference>
<dbReference type="SUPFAM" id="SSF55120">
    <property type="entry name" value="Pseudouridine synthase"/>
    <property type="match status" value="1"/>
</dbReference>
<dbReference type="PROSITE" id="PS50984">
    <property type="entry name" value="TRUD"/>
    <property type="match status" value="1"/>
</dbReference>
<dbReference type="PROSITE" id="PS01268">
    <property type="entry name" value="UPF0024"/>
    <property type="match status" value="1"/>
</dbReference>
<sequence>MYSLDWPRAYGIPNSTATFKSLPEDFQVNELFEGQFNGEGEHIVLKIEKRGLTTEEVVKSLARLINKPVKLISHAGLKDKQALTTQWLSVHAPGEIIDGIETLEAPGWRILECTRHNKKLKPGFLSGNHFIITLRNVSDESDLIHRIEQIKFKGVPNYFGEQRFGRDGGNLIKAEEILVQGRKVKDRFLKGMYFSAARSWLYNLILSRRVKESSWNLPLLGDVIQLVGSNSIFVNDKSMDEQLLQRIGEKDVSPASPLPGRSKNLVKGTALQIINDVYEEWSAWLDGLEKNGLEEAWRANILYAEQIEYRINQGTVELSFVLPAGAYATVVLRELVQY</sequence>
<organism>
    <name type="scientific">Legionella pneumophila (strain Corby)</name>
    <dbReference type="NCBI Taxonomy" id="400673"/>
    <lineage>
        <taxon>Bacteria</taxon>
        <taxon>Pseudomonadati</taxon>
        <taxon>Pseudomonadota</taxon>
        <taxon>Gammaproteobacteria</taxon>
        <taxon>Legionellales</taxon>
        <taxon>Legionellaceae</taxon>
        <taxon>Legionella</taxon>
    </lineage>
</organism>
<name>TRUD_LEGPC</name>